<feature type="chain" id="PRO_0000413923" description="Negative modulator of initiation of replication">
    <location>
        <begin position="1"/>
        <end position="213"/>
    </location>
</feature>
<feature type="region of interest" description="Interaction with DNA" evidence="1">
    <location>
        <begin position="116"/>
        <end position="117"/>
    </location>
</feature>
<feature type="region of interest" description="Interaction with DNA" evidence="1">
    <location>
        <begin position="145"/>
        <end position="149"/>
    </location>
</feature>
<feature type="region of interest" description="Interaction with DNA" evidence="1">
    <location>
        <begin position="179"/>
        <end position="185"/>
    </location>
</feature>
<gene>
    <name evidence="1" type="primary">seqA</name>
    <name type="ordered locus">PARA_19120</name>
</gene>
<keyword id="KW-0963">Cytoplasm</keyword>
<keyword id="KW-0236">DNA replication inhibitor</keyword>
<keyword id="KW-0238">DNA-binding</keyword>
<sequence>MKIIEVDEELYQYIAAQTQSIGESASDILRRLLNLPTHATSSVDFFESVASAETPKSAVHAEPVLTEKTTEVSQPKVEPVEPPKAVKKQSDEAINHIVDKVRALLNSAEFKEEPKAVVRFLSILRTLYRTNPESFAQATESLQGRTRVYFARDEGTLLVAGNHTKPKQIPDTPYWVITNTNSGRKMLMLEGAMQSMHLPEYLIDEVRPYFVSN</sequence>
<organism>
    <name type="scientific">Haemophilus parainfluenzae (strain T3T1)</name>
    <dbReference type="NCBI Taxonomy" id="862965"/>
    <lineage>
        <taxon>Bacteria</taxon>
        <taxon>Pseudomonadati</taxon>
        <taxon>Pseudomonadota</taxon>
        <taxon>Gammaproteobacteria</taxon>
        <taxon>Pasteurellales</taxon>
        <taxon>Pasteurellaceae</taxon>
        <taxon>Haemophilus</taxon>
    </lineage>
</organism>
<reference key="1">
    <citation type="submission" date="2010-07" db="EMBL/GenBank/DDBJ databases">
        <title>The genome sequence of Haemophilus parainfluenzae T3T1.</title>
        <authorList>
            <person name="Crook D."/>
            <person name="Hood D."/>
            <person name="Moxon R."/>
            <person name="Parkhill J."/>
            <person name="Aslett M."/>
            <person name="Bentley S.D."/>
        </authorList>
    </citation>
    <scope>NUCLEOTIDE SEQUENCE [LARGE SCALE GENOMIC DNA]</scope>
    <source>
        <strain>T3T1</strain>
    </source>
</reference>
<proteinExistence type="inferred from homology"/>
<name>SEQA_HAEP3</name>
<evidence type="ECO:0000255" key="1">
    <source>
        <dbReference type="HAMAP-Rule" id="MF_00908"/>
    </source>
</evidence>
<dbReference type="EMBL" id="FQ312002">
    <property type="protein sequence ID" value="CBW16012.1"/>
    <property type="molecule type" value="Genomic_DNA"/>
</dbReference>
<dbReference type="RefSeq" id="WP_014065626.1">
    <property type="nucleotide sequence ID" value="NC_015964.1"/>
</dbReference>
<dbReference type="SMR" id="E1W6L8"/>
<dbReference type="KEGG" id="hpr:PARA_19120"/>
<dbReference type="PATRIC" id="fig|862965.3.peg.1904"/>
<dbReference type="eggNOG" id="COG3057">
    <property type="taxonomic scope" value="Bacteria"/>
</dbReference>
<dbReference type="HOGENOM" id="CLU_099733_0_0_6"/>
<dbReference type="Proteomes" id="UP000007052">
    <property type="component" value="Chromosome"/>
</dbReference>
<dbReference type="GO" id="GO:0005737">
    <property type="term" value="C:cytoplasm"/>
    <property type="evidence" value="ECO:0007669"/>
    <property type="project" value="UniProtKB-SubCell"/>
</dbReference>
<dbReference type="GO" id="GO:0003677">
    <property type="term" value="F:DNA binding"/>
    <property type="evidence" value="ECO:0007669"/>
    <property type="project" value="UniProtKB-UniRule"/>
</dbReference>
<dbReference type="GO" id="GO:0032297">
    <property type="term" value="P:negative regulation of DNA-templated DNA replication initiation"/>
    <property type="evidence" value="ECO:0007669"/>
    <property type="project" value="UniProtKB-UniRule"/>
</dbReference>
<dbReference type="GO" id="GO:0006355">
    <property type="term" value="P:regulation of DNA-templated transcription"/>
    <property type="evidence" value="ECO:0007669"/>
    <property type="project" value="InterPro"/>
</dbReference>
<dbReference type="Gene3D" id="1.10.1220.10">
    <property type="entry name" value="Met repressor-like"/>
    <property type="match status" value="1"/>
</dbReference>
<dbReference type="Gene3D" id="1.20.1380.10">
    <property type="entry name" value="Replication modulator SeqA, C-terminal DNA-binding domain"/>
    <property type="match status" value="1"/>
</dbReference>
<dbReference type="HAMAP" id="MF_00908">
    <property type="entry name" value="SeqA"/>
    <property type="match status" value="1"/>
</dbReference>
<dbReference type="InterPro" id="IPR013321">
    <property type="entry name" value="Arc_rbn_hlx_hlx"/>
</dbReference>
<dbReference type="InterPro" id="IPR010985">
    <property type="entry name" value="Ribbon_hlx_hlx"/>
</dbReference>
<dbReference type="InterPro" id="IPR005621">
    <property type="entry name" value="SeqA"/>
</dbReference>
<dbReference type="InterPro" id="IPR026577">
    <property type="entry name" value="SeqA_DNA-bd_C"/>
</dbReference>
<dbReference type="InterPro" id="IPR036835">
    <property type="entry name" value="SeqA_DNA-bd_C_sf"/>
</dbReference>
<dbReference type="InterPro" id="IPR033761">
    <property type="entry name" value="SeqA_N"/>
</dbReference>
<dbReference type="NCBIfam" id="NF008389">
    <property type="entry name" value="PRK11187.1"/>
    <property type="match status" value="1"/>
</dbReference>
<dbReference type="Pfam" id="PF03925">
    <property type="entry name" value="SeqA"/>
    <property type="match status" value="1"/>
</dbReference>
<dbReference type="Pfam" id="PF17206">
    <property type="entry name" value="SeqA_N"/>
    <property type="match status" value="1"/>
</dbReference>
<dbReference type="PIRSF" id="PIRSF019401">
    <property type="entry name" value="SeqA"/>
    <property type="match status" value="1"/>
</dbReference>
<dbReference type="SUPFAM" id="SSF82808">
    <property type="entry name" value="Replication modulator SeqA, C-terminal DNA-binding domain"/>
    <property type="match status" value="1"/>
</dbReference>
<dbReference type="SUPFAM" id="SSF47598">
    <property type="entry name" value="Ribbon-helix-helix"/>
    <property type="match status" value="1"/>
</dbReference>
<comment type="function">
    <text evidence="1">Negative regulator of replication initiation, which contributes to regulation of DNA replication and ensures that replication initiation occurs exactly once per chromosome per cell cycle. Binds to pairs of hemimethylated GATC sequences in the oriC region, thus preventing assembly of replication proteins and re-initiation at newly replicated origins. Repression is relieved when the region becomes fully methylated.</text>
</comment>
<comment type="subunit">
    <text evidence="1">Homodimer. Polymerizes to form helical filaments.</text>
</comment>
<comment type="subcellular location">
    <subcellularLocation>
        <location evidence="1">Cytoplasm</location>
    </subcellularLocation>
</comment>
<comment type="similarity">
    <text evidence="1">Belongs to the SeqA family.</text>
</comment>
<protein>
    <recommendedName>
        <fullName evidence="1">Negative modulator of initiation of replication</fullName>
    </recommendedName>
</protein>
<accession>E1W6L8</accession>